<dbReference type="EC" id="2.5.1.78" evidence="1"/>
<dbReference type="EMBL" id="CP000671">
    <property type="protein sequence ID" value="ABQ98419.1"/>
    <property type="molecule type" value="Genomic_DNA"/>
</dbReference>
<dbReference type="SMR" id="A5UCB8"/>
<dbReference type="KEGG" id="hip:CGSHiEE_05160"/>
<dbReference type="HOGENOM" id="CLU_089358_1_1_6"/>
<dbReference type="UniPathway" id="UPA00275">
    <property type="reaction ID" value="UER00404"/>
</dbReference>
<dbReference type="GO" id="GO:0005829">
    <property type="term" value="C:cytosol"/>
    <property type="evidence" value="ECO:0007669"/>
    <property type="project" value="TreeGrafter"/>
</dbReference>
<dbReference type="GO" id="GO:0009349">
    <property type="term" value="C:riboflavin synthase complex"/>
    <property type="evidence" value="ECO:0007669"/>
    <property type="project" value="InterPro"/>
</dbReference>
<dbReference type="GO" id="GO:0000906">
    <property type="term" value="F:6,7-dimethyl-8-ribityllumazine synthase activity"/>
    <property type="evidence" value="ECO:0007669"/>
    <property type="project" value="UniProtKB-UniRule"/>
</dbReference>
<dbReference type="GO" id="GO:0009231">
    <property type="term" value="P:riboflavin biosynthetic process"/>
    <property type="evidence" value="ECO:0007669"/>
    <property type="project" value="UniProtKB-UniRule"/>
</dbReference>
<dbReference type="CDD" id="cd09209">
    <property type="entry name" value="Lumazine_synthase-I"/>
    <property type="match status" value="1"/>
</dbReference>
<dbReference type="FunFam" id="3.40.50.960:FF:000001">
    <property type="entry name" value="6,7-dimethyl-8-ribityllumazine synthase"/>
    <property type="match status" value="1"/>
</dbReference>
<dbReference type="Gene3D" id="3.40.50.960">
    <property type="entry name" value="Lumazine/riboflavin synthase"/>
    <property type="match status" value="1"/>
</dbReference>
<dbReference type="HAMAP" id="MF_00178">
    <property type="entry name" value="Lumazine_synth"/>
    <property type="match status" value="1"/>
</dbReference>
<dbReference type="InterPro" id="IPR034964">
    <property type="entry name" value="LS"/>
</dbReference>
<dbReference type="InterPro" id="IPR002180">
    <property type="entry name" value="LS/RS"/>
</dbReference>
<dbReference type="InterPro" id="IPR036467">
    <property type="entry name" value="LS/RS_sf"/>
</dbReference>
<dbReference type="NCBIfam" id="TIGR00114">
    <property type="entry name" value="lumazine-synth"/>
    <property type="match status" value="1"/>
</dbReference>
<dbReference type="NCBIfam" id="NF000812">
    <property type="entry name" value="PRK00061.1-4"/>
    <property type="match status" value="1"/>
</dbReference>
<dbReference type="PANTHER" id="PTHR21058:SF0">
    <property type="entry name" value="6,7-DIMETHYL-8-RIBITYLLUMAZINE SYNTHASE"/>
    <property type="match status" value="1"/>
</dbReference>
<dbReference type="PANTHER" id="PTHR21058">
    <property type="entry name" value="6,7-DIMETHYL-8-RIBITYLLUMAZINE SYNTHASE DMRL SYNTHASE LUMAZINE SYNTHASE"/>
    <property type="match status" value="1"/>
</dbReference>
<dbReference type="Pfam" id="PF00885">
    <property type="entry name" value="DMRL_synthase"/>
    <property type="match status" value="1"/>
</dbReference>
<dbReference type="SUPFAM" id="SSF52121">
    <property type="entry name" value="Lumazine synthase"/>
    <property type="match status" value="1"/>
</dbReference>
<protein>
    <recommendedName>
        <fullName evidence="1">6,7-dimethyl-8-ribityllumazine synthase</fullName>
        <shortName evidence="1">DMRL synthase</shortName>
        <shortName evidence="1">LS</shortName>
        <shortName evidence="1">Lumazine synthase</shortName>
        <ecNumber evidence="1">2.5.1.78</ecNumber>
    </recommendedName>
</protein>
<reference key="1">
    <citation type="journal article" date="2007" name="Genome Biol.">
        <title>Characterization and modeling of the Haemophilus influenzae core and supragenomes based on the complete genomic sequences of Rd and 12 clinical nontypeable strains.</title>
        <authorList>
            <person name="Hogg J.S."/>
            <person name="Hu F.Z."/>
            <person name="Janto B."/>
            <person name="Boissy R."/>
            <person name="Hayes J."/>
            <person name="Keefe R."/>
            <person name="Post J.C."/>
            <person name="Ehrlich G.D."/>
        </authorList>
    </citation>
    <scope>NUCLEOTIDE SEQUENCE [LARGE SCALE GENOMIC DNA]</scope>
    <source>
        <strain>PittEE</strain>
    </source>
</reference>
<keyword id="KW-0686">Riboflavin biosynthesis</keyword>
<keyword id="KW-0808">Transferase</keyword>
<name>RISB_HAEIE</name>
<sequence length="157" mass="16391">MKVLEGSVAAPNAKVAVAIARFNSFINESLLEGAIDALKRIGQVKDENITIVRTPGAYELPLVARRLAESKKFDAIVALGTVIRGGTAHFEYVAGEASSGLGKVAMDAEIPVAFGVLTTENIEQAIERAGTKAGNKGAEAALTALEMVNLIQQIDAA</sequence>
<evidence type="ECO:0000255" key="1">
    <source>
        <dbReference type="HAMAP-Rule" id="MF_00178"/>
    </source>
</evidence>
<comment type="function">
    <text evidence="1">Catalyzes the formation of 6,7-dimethyl-8-ribityllumazine by condensation of 5-amino-6-(D-ribitylamino)uracil with 3,4-dihydroxy-2-butanone 4-phosphate. This is the penultimate step in the biosynthesis of riboflavin.</text>
</comment>
<comment type="catalytic activity">
    <reaction evidence="1">
        <text>(2S)-2-hydroxy-3-oxobutyl phosphate + 5-amino-6-(D-ribitylamino)uracil = 6,7-dimethyl-8-(1-D-ribityl)lumazine + phosphate + 2 H2O + H(+)</text>
        <dbReference type="Rhea" id="RHEA:26152"/>
        <dbReference type="ChEBI" id="CHEBI:15377"/>
        <dbReference type="ChEBI" id="CHEBI:15378"/>
        <dbReference type="ChEBI" id="CHEBI:15934"/>
        <dbReference type="ChEBI" id="CHEBI:43474"/>
        <dbReference type="ChEBI" id="CHEBI:58201"/>
        <dbReference type="ChEBI" id="CHEBI:58830"/>
        <dbReference type="EC" id="2.5.1.78"/>
    </reaction>
</comment>
<comment type="pathway">
    <text evidence="1">Cofactor biosynthesis; riboflavin biosynthesis; riboflavin from 2-hydroxy-3-oxobutyl phosphate and 5-amino-6-(D-ribitylamino)uracil: step 1/2.</text>
</comment>
<comment type="subunit">
    <text evidence="1">Forms an icosahedral capsid composed of 60 subunits, arranged as a dodecamer of pentamers.</text>
</comment>
<comment type="similarity">
    <text evidence="1">Belongs to the DMRL synthase family.</text>
</comment>
<proteinExistence type="inferred from homology"/>
<organism>
    <name type="scientific">Haemophilus influenzae (strain PittEE)</name>
    <dbReference type="NCBI Taxonomy" id="374930"/>
    <lineage>
        <taxon>Bacteria</taxon>
        <taxon>Pseudomonadati</taxon>
        <taxon>Pseudomonadota</taxon>
        <taxon>Gammaproteobacteria</taxon>
        <taxon>Pasteurellales</taxon>
        <taxon>Pasteurellaceae</taxon>
        <taxon>Haemophilus</taxon>
    </lineage>
</organism>
<accession>A5UCB8</accession>
<feature type="chain" id="PRO_1000040428" description="6,7-dimethyl-8-ribityllumazine synthase">
    <location>
        <begin position="1"/>
        <end position="157"/>
    </location>
</feature>
<feature type="active site" description="Proton donor" evidence="1">
    <location>
        <position position="89"/>
    </location>
</feature>
<feature type="binding site" evidence="1">
    <location>
        <position position="22"/>
    </location>
    <ligand>
        <name>5-amino-6-(D-ribitylamino)uracil</name>
        <dbReference type="ChEBI" id="CHEBI:15934"/>
    </ligand>
</feature>
<feature type="binding site" evidence="1">
    <location>
        <begin position="57"/>
        <end position="59"/>
    </location>
    <ligand>
        <name>5-amino-6-(D-ribitylamino)uracil</name>
        <dbReference type="ChEBI" id="CHEBI:15934"/>
    </ligand>
</feature>
<feature type="binding site" evidence="1">
    <location>
        <begin position="81"/>
        <end position="83"/>
    </location>
    <ligand>
        <name>5-amino-6-(D-ribitylamino)uracil</name>
        <dbReference type="ChEBI" id="CHEBI:15934"/>
    </ligand>
</feature>
<feature type="binding site" evidence="1">
    <location>
        <begin position="86"/>
        <end position="87"/>
    </location>
    <ligand>
        <name>(2S)-2-hydroxy-3-oxobutyl phosphate</name>
        <dbReference type="ChEBI" id="CHEBI:58830"/>
    </ligand>
</feature>
<feature type="binding site" evidence="1">
    <location>
        <position position="114"/>
    </location>
    <ligand>
        <name>5-amino-6-(D-ribitylamino)uracil</name>
        <dbReference type="ChEBI" id="CHEBI:15934"/>
    </ligand>
</feature>
<feature type="binding site" evidence="1">
    <location>
        <position position="128"/>
    </location>
    <ligand>
        <name>(2S)-2-hydroxy-3-oxobutyl phosphate</name>
        <dbReference type="ChEBI" id="CHEBI:58830"/>
    </ligand>
</feature>
<gene>
    <name evidence="1" type="primary">ribH</name>
    <name type="ordered locus">CGSHiEE_05160</name>
</gene>